<sequence length="235" mass="26761">MASASKSWLPWRKMFKLGWASFVDPELAKTAFLEFAKQFYVTSSAGAILFDLKKSQGLDQLQAIEKTRKVIITEQFANQTGKWILFDKENTKRINSLAQEHITPLIKRILRLADFKNVLINVQHHKKLQKCLLWEINGLICLVESLQFMENPTAIMEWFQGLKKHCPNVAVVTISGQHKPVIEPSLTEYKAVFGSSLLSFHLDATTINNSHLVRQILEQIKIKATLKSNSKVAKS</sequence>
<feature type="chain" id="PRO_0000210583" description="Uncharacterized protein MG381 homolog">
    <location>
        <begin position="1"/>
        <end position="235"/>
    </location>
</feature>
<accession>P75219</accession>
<keyword id="KW-1185">Reference proteome</keyword>
<dbReference type="EMBL" id="U00089">
    <property type="protein sequence ID" value="AAB95931.1"/>
    <property type="molecule type" value="Genomic_DNA"/>
</dbReference>
<dbReference type="PIR" id="S73609">
    <property type="entry name" value="S73609"/>
</dbReference>
<dbReference type="RefSeq" id="NP_110248.1">
    <property type="nucleotide sequence ID" value="NC_000912.1"/>
</dbReference>
<dbReference type="RefSeq" id="WP_010874916.1">
    <property type="nucleotide sequence ID" value="NZ_OU342337.1"/>
</dbReference>
<dbReference type="IntAct" id="P75219">
    <property type="interactions" value="1"/>
</dbReference>
<dbReference type="STRING" id="272634.MPN_559"/>
<dbReference type="EnsemblBacteria" id="AAB95931">
    <property type="protein sequence ID" value="AAB95931"/>
    <property type="gene ID" value="MPN_559"/>
</dbReference>
<dbReference type="KEGG" id="mpn:MPN_559"/>
<dbReference type="PATRIC" id="fig|272634.6.peg.621"/>
<dbReference type="HOGENOM" id="CLU_1265785_0_0_14"/>
<dbReference type="OrthoDB" id="9939799at2"/>
<dbReference type="BioCyc" id="MPNE272634:G1GJ3-917-MONOMER"/>
<dbReference type="Proteomes" id="UP000000808">
    <property type="component" value="Chromosome"/>
</dbReference>
<proteinExistence type="predicted"/>
<name>Y559_MYCPN</name>
<protein>
    <recommendedName>
        <fullName>Uncharacterized protein MG381 homolog</fullName>
    </recommendedName>
</protein>
<reference key="1">
    <citation type="journal article" date="1996" name="Nucleic Acids Res.">
        <title>Complete sequence analysis of the genome of the bacterium Mycoplasma pneumoniae.</title>
        <authorList>
            <person name="Himmelreich R."/>
            <person name="Hilbert H."/>
            <person name="Plagens H."/>
            <person name="Pirkl E."/>
            <person name="Li B.-C."/>
            <person name="Herrmann R."/>
        </authorList>
    </citation>
    <scope>NUCLEOTIDE SEQUENCE [LARGE SCALE GENOMIC DNA]</scope>
    <source>
        <strain>ATCC 29342 / M129 / Subtype 1</strain>
    </source>
</reference>
<organism>
    <name type="scientific">Mycoplasma pneumoniae (strain ATCC 29342 / M129 / Subtype 1)</name>
    <name type="common">Mycoplasmoides pneumoniae</name>
    <dbReference type="NCBI Taxonomy" id="272634"/>
    <lineage>
        <taxon>Bacteria</taxon>
        <taxon>Bacillati</taxon>
        <taxon>Mycoplasmatota</taxon>
        <taxon>Mycoplasmoidales</taxon>
        <taxon>Mycoplasmoidaceae</taxon>
        <taxon>Mycoplasmoides</taxon>
    </lineage>
</organism>
<gene>
    <name type="ordered locus">MPN_559</name>
    <name type="ORF">H03_orf235</name>
    <name type="ORF">MP283</name>
</gene>